<dbReference type="EMBL" id="AH004149">
    <property type="protein sequence ID" value="AAB24901.2"/>
    <property type="molecule type" value="Genomic_DNA"/>
</dbReference>
<dbReference type="PIR" id="S30004">
    <property type="entry name" value="S30004"/>
</dbReference>
<dbReference type="SMR" id="P48536"/>
<dbReference type="GO" id="GO:0022625">
    <property type="term" value="C:cytosolic large ribosomal subunit"/>
    <property type="evidence" value="ECO:0007669"/>
    <property type="project" value="TreeGrafter"/>
</dbReference>
<dbReference type="GO" id="GO:0003735">
    <property type="term" value="F:structural constituent of ribosome"/>
    <property type="evidence" value="ECO:0007669"/>
    <property type="project" value="InterPro"/>
</dbReference>
<dbReference type="GO" id="GO:0006412">
    <property type="term" value="P:translation"/>
    <property type="evidence" value="ECO:0007669"/>
    <property type="project" value="InterPro"/>
</dbReference>
<dbReference type="FunFam" id="1.10.1620.10:FF:000001">
    <property type="entry name" value="60S ribosomal protein-like L39"/>
    <property type="match status" value="1"/>
</dbReference>
<dbReference type="Gene3D" id="1.10.1620.10">
    <property type="entry name" value="Ribosomal protein L39e"/>
    <property type="match status" value="1"/>
</dbReference>
<dbReference type="HAMAP" id="MF_00629">
    <property type="entry name" value="Ribosomal_eL39"/>
    <property type="match status" value="1"/>
</dbReference>
<dbReference type="InterPro" id="IPR000077">
    <property type="entry name" value="Ribosomal_eL39"/>
</dbReference>
<dbReference type="InterPro" id="IPR020083">
    <property type="entry name" value="Ribosomal_eL39_CS"/>
</dbReference>
<dbReference type="InterPro" id="IPR023626">
    <property type="entry name" value="Ribosomal_eL39_dom_sf"/>
</dbReference>
<dbReference type="PANTHER" id="PTHR19970:SF0">
    <property type="entry name" value="LARGE RIBOSOMAL SUBUNIT PROTEIN EL39"/>
    <property type="match status" value="1"/>
</dbReference>
<dbReference type="PANTHER" id="PTHR19970">
    <property type="entry name" value="RIBOSOMAL PROTEIN L39E"/>
    <property type="match status" value="1"/>
</dbReference>
<dbReference type="Pfam" id="PF00832">
    <property type="entry name" value="Ribosomal_L39"/>
    <property type="match status" value="1"/>
</dbReference>
<dbReference type="SUPFAM" id="SSF48662">
    <property type="entry name" value="Ribosomal protein L39e"/>
    <property type="match status" value="1"/>
</dbReference>
<dbReference type="PROSITE" id="PS00051">
    <property type="entry name" value="RIBOSOMAL_L39E"/>
    <property type="match status" value="1"/>
</dbReference>
<organism>
    <name type="scientific">Kluyveromyces marxianus</name>
    <name type="common">Yeast</name>
    <name type="synonym">Candida kefyr</name>
    <dbReference type="NCBI Taxonomy" id="4911"/>
    <lineage>
        <taxon>Eukaryota</taxon>
        <taxon>Fungi</taxon>
        <taxon>Dikarya</taxon>
        <taxon>Ascomycota</taxon>
        <taxon>Saccharomycotina</taxon>
        <taxon>Saccharomycetes</taxon>
        <taxon>Saccharomycetales</taxon>
        <taxon>Saccharomycetaceae</taxon>
        <taxon>Kluyveromyces</taxon>
    </lineage>
</organism>
<sequence>MAAKKSFIIKQKLAKAKNQNRPLPQWFRLKTNNTIRYNAKRRHWRRTKLVC</sequence>
<keyword id="KW-0687">Ribonucleoprotein</keyword>
<keyword id="KW-0689">Ribosomal protein</keyword>
<feature type="initiator methionine" description="Removed" evidence="1">
    <location>
        <position position="1"/>
    </location>
</feature>
<feature type="chain" id="PRO_0000127042" description="Large ribosomal subunit protein eL39">
    <location>
        <begin position="2"/>
        <end position="51"/>
    </location>
</feature>
<comment type="subunit">
    <text evidence="2">Interacts with YIH1.</text>
</comment>
<comment type="similarity">
    <text evidence="3">Belongs to the eukaryotic ribosomal protein eL39 family.</text>
</comment>
<name>RL39_KLUMA</name>
<proteinExistence type="inferred from homology"/>
<protein>
    <recommendedName>
        <fullName evidence="3">Large ribosomal subunit protein eL39</fullName>
    </recommendedName>
    <alternativeName>
        <fullName>60S ribosomal protein L39</fullName>
    </alternativeName>
    <alternativeName>
        <fullName>L46</fullName>
    </alternativeName>
</protein>
<gene>
    <name type="primary">RPL39</name>
    <name type="synonym">RPL46</name>
</gene>
<accession>P48536</accession>
<evidence type="ECO:0000250" key="1"/>
<evidence type="ECO:0000250" key="2">
    <source>
        <dbReference type="UniProtKB" id="P04650"/>
    </source>
</evidence>
<evidence type="ECO:0000305" key="3"/>
<reference key="1">
    <citation type="journal article" date="1992" name="Yeast">
        <title>Structural and putative regulatory sequences of Kluyveromyces ribosomal protein genes.</title>
        <authorList>
            <person name="Bergkamp-Steffens G.K."/>
            <person name="Hoekstra R."/>
            <person name="Planta R.J."/>
        </authorList>
    </citation>
    <scope>NUCLEOTIDE SEQUENCE [GENOMIC DNA]</scope>
</reference>